<gene>
    <name type="primary">SUR1</name>
    <name type="synonym">ALF1</name>
    <name type="synonym">HLS3</name>
    <name type="synonym">RTY</name>
    <name type="synonym">RTY1</name>
    <name type="ordered locus">At2g20610</name>
    <name type="ORF">F23N11.7</name>
</gene>
<protein>
    <recommendedName>
        <fullName>S-alkyl-thiohydroximate lyase SUR1</fullName>
        <ecNumber>4.4.1.-</ecNumber>
    </recommendedName>
    <alternativeName>
        <fullName>Protein ABERRANT LATERAL ROOT FORMATION 1</fullName>
    </alternativeName>
    <alternativeName>
        <fullName>Protein HOOKLESS 3</fullName>
    </alternativeName>
    <alternativeName>
        <fullName>Protein ROOTY</fullName>
    </alternativeName>
    <alternativeName>
        <fullName>Protein ROOTY 1</fullName>
    </alternativeName>
    <alternativeName>
        <fullName>Protein SUPERROOT 1</fullName>
    </alternativeName>
</protein>
<organism>
    <name type="scientific">Arabidopsis thaliana</name>
    <name type="common">Mouse-ear cress</name>
    <dbReference type="NCBI Taxonomy" id="3702"/>
    <lineage>
        <taxon>Eukaryota</taxon>
        <taxon>Viridiplantae</taxon>
        <taxon>Streptophyta</taxon>
        <taxon>Embryophyta</taxon>
        <taxon>Tracheophyta</taxon>
        <taxon>Spermatophyta</taxon>
        <taxon>Magnoliopsida</taxon>
        <taxon>eudicotyledons</taxon>
        <taxon>Gunneridae</taxon>
        <taxon>Pentapetalae</taxon>
        <taxon>rosids</taxon>
        <taxon>malvids</taxon>
        <taxon>Brassicales</taxon>
        <taxon>Brassicaceae</taxon>
        <taxon>Camelineae</taxon>
        <taxon>Arabidopsis</taxon>
    </lineage>
</organism>
<name>SUR1_ARATH</name>
<reference key="1">
    <citation type="submission" date="2000-09" db="EMBL/GenBank/DDBJ databases">
        <title>The ROOTY/SUPERROOT1 gene of Arabidopsis encodes a putative tyrosine aminotransferase.</title>
        <authorList>
            <person name="Gopalraj M."/>
            <person name="Olszewski N.E."/>
        </authorList>
    </citation>
    <scope>NUCLEOTIDE SEQUENCE [MRNA] (ISOFORM 1)</scope>
</reference>
<reference key="2">
    <citation type="journal article" date="1999" name="Nature">
        <title>Sequence and analysis of chromosome 2 of the plant Arabidopsis thaliana.</title>
        <authorList>
            <person name="Lin X."/>
            <person name="Kaul S."/>
            <person name="Rounsley S.D."/>
            <person name="Shea T.P."/>
            <person name="Benito M.-I."/>
            <person name="Town C.D."/>
            <person name="Fujii C.Y."/>
            <person name="Mason T.M."/>
            <person name="Bowman C.L."/>
            <person name="Barnstead M.E."/>
            <person name="Feldblyum T.V."/>
            <person name="Buell C.R."/>
            <person name="Ketchum K.A."/>
            <person name="Lee J.J."/>
            <person name="Ronning C.M."/>
            <person name="Koo H.L."/>
            <person name="Moffat K.S."/>
            <person name="Cronin L.A."/>
            <person name="Shen M."/>
            <person name="Pai G."/>
            <person name="Van Aken S."/>
            <person name="Umayam L."/>
            <person name="Tallon L.J."/>
            <person name="Gill J.E."/>
            <person name="Adams M.D."/>
            <person name="Carrera A.J."/>
            <person name="Creasy T.H."/>
            <person name="Goodman H.M."/>
            <person name="Somerville C.R."/>
            <person name="Copenhaver G.P."/>
            <person name="Preuss D."/>
            <person name="Nierman W.C."/>
            <person name="White O."/>
            <person name="Eisen J.A."/>
            <person name="Salzberg S.L."/>
            <person name="Fraser C.M."/>
            <person name="Venter J.C."/>
        </authorList>
    </citation>
    <scope>NUCLEOTIDE SEQUENCE [LARGE SCALE GENOMIC DNA]</scope>
    <source>
        <strain>cv. Columbia</strain>
    </source>
</reference>
<reference key="3">
    <citation type="journal article" date="2017" name="Plant J.">
        <title>Araport11: a complete reannotation of the Arabidopsis thaliana reference genome.</title>
        <authorList>
            <person name="Cheng C.Y."/>
            <person name="Krishnakumar V."/>
            <person name="Chan A.P."/>
            <person name="Thibaud-Nissen F."/>
            <person name="Schobel S."/>
            <person name="Town C.D."/>
        </authorList>
    </citation>
    <scope>GENOME REANNOTATION</scope>
    <source>
        <strain>cv. Columbia</strain>
    </source>
</reference>
<reference key="4">
    <citation type="journal article" date="2003" name="Science">
        <title>Empirical analysis of transcriptional activity in the Arabidopsis genome.</title>
        <authorList>
            <person name="Yamada K."/>
            <person name="Lim J."/>
            <person name="Dale J.M."/>
            <person name="Chen H."/>
            <person name="Shinn P."/>
            <person name="Palm C.J."/>
            <person name="Southwick A.M."/>
            <person name="Wu H.C."/>
            <person name="Kim C.J."/>
            <person name="Nguyen M."/>
            <person name="Pham P.K."/>
            <person name="Cheuk R.F."/>
            <person name="Karlin-Newmann G."/>
            <person name="Liu S.X."/>
            <person name="Lam B."/>
            <person name="Sakano H."/>
            <person name="Wu T."/>
            <person name="Yu G."/>
            <person name="Miranda M."/>
            <person name="Quach H.L."/>
            <person name="Tripp M."/>
            <person name="Chang C.H."/>
            <person name="Lee J.M."/>
            <person name="Toriumi M.J."/>
            <person name="Chan M.M."/>
            <person name="Tang C.C."/>
            <person name="Onodera C.S."/>
            <person name="Deng J.M."/>
            <person name="Akiyama K."/>
            <person name="Ansari Y."/>
            <person name="Arakawa T."/>
            <person name="Banh J."/>
            <person name="Banno F."/>
            <person name="Bowser L."/>
            <person name="Brooks S.Y."/>
            <person name="Carninci P."/>
            <person name="Chao Q."/>
            <person name="Choy N."/>
            <person name="Enju A."/>
            <person name="Goldsmith A.D."/>
            <person name="Gurjal M."/>
            <person name="Hansen N.F."/>
            <person name="Hayashizaki Y."/>
            <person name="Johnson-Hopson C."/>
            <person name="Hsuan V.W."/>
            <person name="Iida K."/>
            <person name="Karnes M."/>
            <person name="Khan S."/>
            <person name="Koesema E."/>
            <person name="Ishida J."/>
            <person name="Jiang P.X."/>
            <person name="Jones T."/>
            <person name="Kawai J."/>
            <person name="Kamiya A."/>
            <person name="Meyers C."/>
            <person name="Nakajima M."/>
            <person name="Narusaka M."/>
            <person name="Seki M."/>
            <person name="Sakurai T."/>
            <person name="Satou M."/>
            <person name="Tamse R."/>
            <person name="Vaysberg M."/>
            <person name="Wallender E.K."/>
            <person name="Wong C."/>
            <person name="Yamamura Y."/>
            <person name="Yuan S."/>
            <person name="Shinozaki K."/>
            <person name="Davis R.W."/>
            <person name="Theologis A."/>
            <person name="Ecker J.R."/>
        </authorList>
    </citation>
    <scope>NUCLEOTIDE SEQUENCE [LARGE SCALE MRNA] (ISOFORM 1)</scope>
    <source>
        <strain>cv. Columbia</strain>
    </source>
</reference>
<reference key="5">
    <citation type="journal article" date="2004" name="Genome Res.">
        <title>Whole genome sequence comparisons and 'full-length' cDNA sequences: a combined approach to evaluate and improve Arabidopsis genome annotation.</title>
        <authorList>
            <person name="Castelli V."/>
            <person name="Aury J.-M."/>
            <person name="Jaillon O."/>
            <person name="Wincker P."/>
            <person name="Clepet C."/>
            <person name="Menard M."/>
            <person name="Cruaud C."/>
            <person name="Quetier F."/>
            <person name="Scarpelli C."/>
            <person name="Schaechter V."/>
            <person name="Temple G."/>
            <person name="Caboche M."/>
            <person name="Weissenbach J."/>
            <person name="Salanoubat M."/>
        </authorList>
    </citation>
    <scope>NUCLEOTIDE SEQUENCE [LARGE SCALE MRNA] (ISOFORM 2)</scope>
    <source>
        <strain>cv. Columbia</strain>
    </source>
</reference>
<reference key="6">
    <citation type="journal article" date="1995" name="Genes Dev.">
        <title>A pathway for lateral root formation in Arabidopsis thaliana.</title>
        <authorList>
            <person name="Celenza J.L. Jr."/>
            <person name="Grisafi P.L."/>
            <person name="Fink G.R."/>
        </authorList>
    </citation>
    <scope>DISRUPTION PHENOTYPE</scope>
</reference>
<reference key="7">
    <citation type="journal article" date="1995" name="Plant Cell">
        <title>Superroot, a recessive mutation in Arabidopsis, confers auxin overproduction.</title>
        <authorList>
            <person name="Boerjan W."/>
            <person name="Cervera M.T."/>
            <person name="Delarue M."/>
            <person name="Beeckman T."/>
            <person name="Dewitte W."/>
            <person name="Bellini C."/>
            <person name="Caboche M."/>
            <person name="Van Onckelen H."/>
            <person name="Van Montagu M."/>
            <person name="Inze D."/>
        </authorList>
    </citation>
    <scope>DISRUPTION PHENOTYPE</scope>
</reference>
<reference key="8">
    <citation type="journal article" date="1995" name="Plant Cell">
        <title>A mutation altering auxin homeostasis and plant morphology in Arabidopsis.</title>
        <authorList>
            <person name="King J.J."/>
            <person name="Stimart D.P."/>
            <person name="Fisher R.H."/>
            <person name="Bleecker A.B."/>
        </authorList>
    </citation>
    <scope>DISRUPTION PHENOTYPE</scope>
</reference>
<reference key="9">
    <citation type="journal article" date="1996" name="Cell">
        <title>HOOKLESS1, an ethylene response gene, is required for differential cell elongation in the Arabidopsis hypocotyl.</title>
        <authorList>
            <person name="Lehman A."/>
            <person name="Black R."/>
            <person name="Ecker J.R."/>
        </authorList>
    </citation>
    <scope>DISRUPTION PHENOTYPE</scope>
</reference>
<reference key="10">
    <citation type="journal article" date="2004" name="Plant J.">
        <title>Arabidopsis mutants in the C-S lyase of glucosinolate biosynthesis establish a critical role for indole-3-acetaldoxime in auxin homeostasis.</title>
        <authorList>
            <person name="Mikkelsen M.D."/>
            <person name="Naur P."/>
            <person name="Halkier B.A."/>
        </authorList>
    </citation>
    <scope>FUNCTION</scope>
    <scope>CATALYTIC ACTIVITY</scope>
    <scope>COFACTOR</scope>
</reference>
<evidence type="ECO:0000269" key="1">
    <source>
    </source>
</evidence>
<evidence type="ECO:0000269" key="2">
    <source>
    </source>
</evidence>
<evidence type="ECO:0000269" key="3">
    <source>
    </source>
</evidence>
<evidence type="ECO:0000269" key="4">
    <source>
    </source>
</evidence>
<evidence type="ECO:0000269" key="5">
    <source>
    </source>
</evidence>
<evidence type="ECO:0000303" key="6">
    <source>
    </source>
</evidence>
<evidence type="ECO:0000305" key="7"/>
<proteinExistence type="evidence at protein level"/>
<sequence length="462" mass="51088">MSEEQPHANLAVPAFKTEKEPITQTRNGQSSVWRFGGSDKAAKASTVTLRGVIYMLFDNCGKDVNKTILPLGHGDPSVYPCFRTCIEAEDAVVDVLRSGKGNSYGPGAGILPARRAVADYMNRDLPHKLTPEDIFLTAGCNQGIEIVFESLARPNANILLPRPGFPHYDARAAYSGLEVRKFDLLPEKEWEIDLEGIEAIADENTVAMVVINPNNPCGNVYSHDHLKKVAETARKLGIMVISDEVYDRTIFGDNPFVSMGKFASIVPVLTLAGISKGWVVPGWKIGWIALNDPEGVFETTKVLQSIKQNLDVTPDPATIIQAALPAILEKADKNFFAKKNKILKHNVDLVCDRLKDIPCVVCPKKPESCTYLLTKLELSLMDNIKDDIDFCVKLAREENLVFLPGDALGLKNWMRITIGVEAHMLEDALERLKGFCTRHAKKTETETESLQALKLSDNNLEM</sequence>
<feature type="chain" id="PRO_0000412723" description="S-alkyl-thiohydroximate lyase SUR1">
    <location>
        <begin position="1"/>
        <end position="462"/>
    </location>
</feature>
<feature type="splice variant" id="VSP_041760" description="In isoform 2." evidence="6">
    <original>DALGLKNWMRITIGVEAHMLEDALERLKGFC</original>
    <variation>KIMKLSSMSLDLSFDTKMGFVGNVLQGMLWV</variation>
    <location>
        <begin position="406"/>
        <end position="436"/>
    </location>
</feature>
<feature type="splice variant" id="VSP_041761" description="In isoform 2." evidence="6">
    <location>
        <begin position="437"/>
        <end position="462"/>
    </location>
</feature>
<feature type="sequence conflict" description="In Ref. 5; BX820228." evidence="7" ref="5">
    <original>K</original>
    <variation>E</variation>
    <location>
        <position position="66"/>
    </location>
</feature>
<feature type="sequence conflict" description="In Ref. 5; BX820228." evidence="7" ref="5">
    <original>K</original>
    <variation>R</variation>
    <location>
        <position position="188"/>
    </location>
</feature>
<feature type="sequence conflict" description="In Ref. 4; AAL06865." evidence="7" ref="4">
    <original>M</original>
    <variation>V</variation>
    <location>
        <position position="414"/>
    </location>
</feature>
<dbReference type="EC" id="4.4.1.-"/>
<dbReference type="EMBL" id="AF301898">
    <property type="protein sequence ID" value="AAG37061.1"/>
    <property type="molecule type" value="mRNA"/>
</dbReference>
<dbReference type="EMBL" id="AC007048">
    <property type="protein sequence ID" value="AAD21706.1"/>
    <property type="molecule type" value="Genomic_DNA"/>
</dbReference>
<dbReference type="EMBL" id="CP002685">
    <property type="protein sequence ID" value="AEC07041.1"/>
    <property type="molecule type" value="Genomic_DNA"/>
</dbReference>
<dbReference type="EMBL" id="CP002685">
    <property type="protein sequence ID" value="AEC07042.1"/>
    <property type="molecule type" value="Genomic_DNA"/>
</dbReference>
<dbReference type="EMBL" id="AY050987">
    <property type="protein sequence ID" value="AAK93664.1"/>
    <property type="molecule type" value="mRNA"/>
</dbReference>
<dbReference type="EMBL" id="AY054204">
    <property type="protein sequence ID" value="AAL06865.1"/>
    <property type="molecule type" value="mRNA"/>
</dbReference>
<dbReference type="EMBL" id="AY091293">
    <property type="protein sequence ID" value="AAM14232.1"/>
    <property type="molecule type" value="mRNA"/>
</dbReference>
<dbReference type="EMBL" id="BX820228">
    <property type="status" value="NOT_ANNOTATED_CDS"/>
    <property type="molecule type" value="mRNA"/>
</dbReference>
<dbReference type="PIR" id="C84591">
    <property type="entry name" value="C84591"/>
</dbReference>
<dbReference type="RefSeq" id="NP_179650.1">
    <molecule id="Q9SIV0-1"/>
    <property type="nucleotide sequence ID" value="NM_127622.4"/>
</dbReference>
<dbReference type="RefSeq" id="NP_973489.1">
    <molecule id="Q9SIV0-2"/>
    <property type="nucleotide sequence ID" value="NM_201760.2"/>
</dbReference>
<dbReference type="SMR" id="Q9SIV0"/>
<dbReference type="BioGRID" id="1938">
    <property type="interactions" value="1"/>
</dbReference>
<dbReference type="FunCoup" id="Q9SIV0">
    <property type="interactions" value="343"/>
</dbReference>
<dbReference type="IntAct" id="Q9SIV0">
    <property type="interactions" value="1"/>
</dbReference>
<dbReference type="STRING" id="3702.Q9SIV0"/>
<dbReference type="iPTMnet" id="Q9SIV0"/>
<dbReference type="PaxDb" id="3702-AT2G20610.1"/>
<dbReference type="ProteomicsDB" id="226767">
    <molecule id="Q9SIV0-1"/>
</dbReference>
<dbReference type="EnsemblPlants" id="AT2G20610.1">
    <molecule id="Q9SIV0-1"/>
    <property type="protein sequence ID" value="AT2G20610.1"/>
    <property type="gene ID" value="AT2G20610"/>
</dbReference>
<dbReference type="EnsemblPlants" id="AT2G20610.2">
    <molecule id="Q9SIV0-2"/>
    <property type="protein sequence ID" value="AT2G20610.2"/>
    <property type="gene ID" value="AT2G20610"/>
</dbReference>
<dbReference type="GeneID" id="816585"/>
<dbReference type="Gramene" id="AT2G20610.1">
    <molecule id="Q9SIV0-1"/>
    <property type="protein sequence ID" value="AT2G20610.1"/>
    <property type="gene ID" value="AT2G20610"/>
</dbReference>
<dbReference type="Gramene" id="AT2G20610.2">
    <molecule id="Q9SIV0-2"/>
    <property type="protein sequence ID" value="AT2G20610.2"/>
    <property type="gene ID" value="AT2G20610"/>
</dbReference>
<dbReference type="KEGG" id="ath:AT2G20610"/>
<dbReference type="Araport" id="AT2G20610"/>
<dbReference type="TAIR" id="AT2G20610">
    <property type="gene designation" value="SUR1"/>
</dbReference>
<dbReference type="eggNOG" id="KOG0259">
    <property type="taxonomic scope" value="Eukaryota"/>
</dbReference>
<dbReference type="HOGENOM" id="CLU_017584_4_2_1"/>
<dbReference type="InParanoid" id="Q9SIV0"/>
<dbReference type="OMA" id="CTRHAKK"/>
<dbReference type="PhylomeDB" id="Q9SIV0"/>
<dbReference type="BioCyc" id="ARA:AT2G20610-MONOMER"/>
<dbReference type="BioCyc" id="MetaCyc:AT2G20610-MONOMER"/>
<dbReference type="PRO" id="PR:Q9SIV0"/>
<dbReference type="Proteomes" id="UP000006548">
    <property type="component" value="Chromosome 2"/>
</dbReference>
<dbReference type="ExpressionAtlas" id="Q9SIV0">
    <property type="expression patterns" value="baseline and differential"/>
</dbReference>
<dbReference type="GO" id="GO:0005829">
    <property type="term" value="C:cytosol"/>
    <property type="evidence" value="ECO:0007005"/>
    <property type="project" value="TAIR"/>
</dbReference>
<dbReference type="GO" id="GO:0005739">
    <property type="term" value="C:mitochondrion"/>
    <property type="evidence" value="ECO:0007005"/>
    <property type="project" value="TAIR"/>
</dbReference>
<dbReference type="GO" id="GO:0016846">
    <property type="term" value="F:carbon-sulfur lyase activity"/>
    <property type="evidence" value="ECO:0000314"/>
    <property type="project" value="TAIR"/>
</dbReference>
<dbReference type="GO" id="GO:0030170">
    <property type="term" value="F:pyridoxal phosphate binding"/>
    <property type="evidence" value="ECO:0007669"/>
    <property type="project" value="InterPro"/>
</dbReference>
<dbReference type="GO" id="GO:0080108">
    <property type="term" value="F:S-alkylthiohydroximate lyase activity"/>
    <property type="evidence" value="ECO:0000315"/>
    <property type="project" value="TAIR"/>
</dbReference>
<dbReference type="GO" id="GO:0008483">
    <property type="term" value="F:transaminase activity"/>
    <property type="evidence" value="ECO:0007669"/>
    <property type="project" value="InterPro"/>
</dbReference>
<dbReference type="GO" id="GO:0048830">
    <property type="term" value="P:adventitious root development"/>
    <property type="evidence" value="ECO:0000304"/>
    <property type="project" value="TAIR"/>
</dbReference>
<dbReference type="GO" id="GO:0006520">
    <property type="term" value="P:amino acid metabolic process"/>
    <property type="evidence" value="ECO:0007669"/>
    <property type="project" value="InterPro"/>
</dbReference>
<dbReference type="GO" id="GO:0050832">
    <property type="term" value="P:defense response to fungus"/>
    <property type="evidence" value="ECO:0000314"/>
    <property type="project" value="TAIR"/>
</dbReference>
<dbReference type="GO" id="GO:0019761">
    <property type="term" value="P:glucosinolate biosynthetic process"/>
    <property type="evidence" value="ECO:0000315"/>
    <property type="project" value="TAIR"/>
</dbReference>
<dbReference type="GO" id="GO:0009684">
    <property type="term" value="P:indoleacetic acid biosynthetic process"/>
    <property type="evidence" value="ECO:0000315"/>
    <property type="project" value="TAIR"/>
</dbReference>
<dbReference type="GO" id="GO:0001560">
    <property type="term" value="P:regulation of cell growth by extracellular stimulus"/>
    <property type="evidence" value="ECO:0000315"/>
    <property type="project" value="TAIR"/>
</dbReference>
<dbReference type="CDD" id="cd00609">
    <property type="entry name" value="AAT_like"/>
    <property type="match status" value="1"/>
</dbReference>
<dbReference type="FunFam" id="3.90.1150.10:FF:000040">
    <property type="entry name" value="Tyrosine aminotransferase"/>
    <property type="match status" value="1"/>
</dbReference>
<dbReference type="FunFam" id="3.40.640.10:FF:000048">
    <property type="entry name" value="tyrosine aminotransferase"/>
    <property type="match status" value="1"/>
</dbReference>
<dbReference type="Gene3D" id="3.90.1150.10">
    <property type="entry name" value="Aspartate Aminotransferase, domain 1"/>
    <property type="match status" value="1"/>
</dbReference>
<dbReference type="Gene3D" id="3.40.640.10">
    <property type="entry name" value="Type I PLP-dependent aspartate aminotransferase-like (Major domain)"/>
    <property type="match status" value="1"/>
</dbReference>
<dbReference type="InterPro" id="IPR004839">
    <property type="entry name" value="Aminotransferase_I/II_large"/>
</dbReference>
<dbReference type="InterPro" id="IPR015424">
    <property type="entry name" value="PyrdxlP-dep_Trfase"/>
</dbReference>
<dbReference type="InterPro" id="IPR015421">
    <property type="entry name" value="PyrdxlP-dep_Trfase_major"/>
</dbReference>
<dbReference type="InterPro" id="IPR015422">
    <property type="entry name" value="PyrdxlP-dep_Trfase_small"/>
</dbReference>
<dbReference type="InterPro" id="IPR005958">
    <property type="entry name" value="TyrNic_aminoTrfase"/>
</dbReference>
<dbReference type="NCBIfam" id="TIGR01265">
    <property type="entry name" value="tyr_nico_aTase"/>
    <property type="match status" value="1"/>
</dbReference>
<dbReference type="PANTHER" id="PTHR45744:SF15">
    <property type="entry name" value="S-ALKYL-THIOHYDROXIMATE LYASE SUR1"/>
    <property type="match status" value="1"/>
</dbReference>
<dbReference type="PANTHER" id="PTHR45744">
    <property type="entry name" value="TYROSINE AMINOTRANSFERASE"/>
    <property type="match status" value="1"/>
</dbReference>
<dbReference type="Pfam" id="PF00155">
    <property type="entry name" value="Aminotran_1_2"/>
    <property type="match status" value="1"/>
</dbReference>
<dbReference type="PIRSF" id="PIRSF000517">
    <property type="entry name" value="Tyr_transaminase"/>
    <property type="match status" value="1"/>
</dbReference>
<dbReference type="SUPFAM" id="SSF53383">
    <property type="entry name" value="PLP-dependent transferases"/>
    <property type="match status" value="1"/>
</dbReference>
<accession>Q9SIV0</accession>
<accession>F4IVH1</accession>
<accession>Q940P9</accession>
<keyword id="KW-0025">Alternative splicing</keyword>
<keyword id="KW-0341">Growth regulation</keyword>
<keyword id="KW-0456">Lyase</keyword>
<keyword id="KW-0663">Pyridoxal phosphate</keyword>
<keyword id="KW-1185">Reference proteome</keyword>
<comment type="function">
    <text evidence="2">C-S lyase involved in glucosinolate biosynthesis. Converts S-(alkylacetohydroximoyl)-L-cysteine to thiohydroximate. Functions in auxin homeostasis. Probably required for glucosinolate activation in response to pathogens.</text>
</comment>
<comment type="cofactor">
    <cofactor evidence="2">
        <name>pyridoxal 5'-phosphate</name>
        <dbReference type="ChEBI" id="CHEBI:597326"/>
    </cofactor>
</comment>
<comment type="interaction">
    <interactant intactId="EBI-25518528">
        <id>Q9SIV0</id>
    </interactant>
    <interactant intactId="EBI-25518517">
        <id>F4K773</id>
        <label>At5g37478</label>
    </interactant>
    <organismsDiffer>false</organismsDiffer>
    <experiments>3</experiments>
</comment>
<comment type="alternative products">
    <event type="alternative splicing"/>
    <isoform>
        <id>Q9SIV0-1</id>
        <name>1</name>
        <sequence type="displayed"/>
    </isoform>
    <isoform>
        <id>Q9SIV0-2</id>
        <name>2</name>
        <sequence type="described" ref="VSP_041760 VSP_041761"/>
    </isoform>
</comment>
<comment type="disruption phenotype">
    <text evidence="1 3 4 5">Hyperproliferation of lateral roots. Small and epinastic cotyledons and true leaves. Rare floral organs and sterile flowers. High levels of endogenous free and conjugated auxin.</text>
</comment>
<comment type="similarity">
    <text evidence="7">Belongs to the class-I pyridoxal-phosphate-dependent aminotransferase family.</text>
</comment>